<organism>
    <name type="scientific">Salmonella typhi</name>
    <dbReference type="NCBI Taxonomy" id="90370"/>
    <lineage>
        <taxon>Bacteria</taxon>
        <taxon>Pseudomonadati</taxon>
        <taxon>Pseudomonadota</taxon>
        <taxon>Gammaproteobacteria</taxon>
        <taxon>Enterobacterales</taxon>
        <taxon>Enterobacteriaceae</taxon>
        <taxon>Salmonella</taxon>
    </lineage>
</organism>
<gene>
    <name evidence="1" type="primary">deoC</name>
    <name type="ordered locus">STY4918</name>
    <name type="ordered locus">t4610</name>
</gene>
<feature type="chain" id="PRO_0000057301" description="Deoxyribose-phosphate aldolase">
    <location>
        <begin position="1"/>
        <end position="259"/>
    </location>
</feature>
<feature type="active site" description="Proton donor/acceptor" evidence="1">
    <location>
        <position position="102"/>
    </location>
</feature>
<feature type="active site" description="Schiff-base intermediate with acetaldehyde" evidence="1">
    <location>
        <position position="167"/>
    </location>
</feature>
<feature type="active site" description="Proton donor/acceptor" evidence="1">
    <location>
        <position position="201"/>
    </location>
</feature>
<keyword id="KW-0963">Cytoplasm</keyword>
<keyword id="KW-0456">Lyase</keyword>
<keyword id="KW-0704">Schiff base</keyword>
<dbReference type="EC" id="4.1.2.4" evidence="1"/>
<dbReference type="EMBL" id="AL513382">
    <property type="protein sequence ID" value="CAD03402.1"/>
    <property type="status" value="ALT_INIT"/>
    <property type="molecule type" value="Genomic_DNA"/>
</dbReference>
<dbReference type="EMBL" id="AE014613">
    <property type="protein sequence ID" value="AAO72042.1"/>
    <property type="status" value="ALT_INIT"/>
    <property type="molecule type" value="Genomic_DNA"/>
</dbReference>
<dbReference type="PIR" id="AC1073">
    <property type="entry name" value="AC1073"/>
</dbReference>
<dbReference type="RefSeq" id="NP_458979.1">
    <property type="nucleotide sequence ID" value="NC_003198.1"/>
</dbReference>
<dbReference type="RefSeq" id="WP_031624265.1">
    <property type="nucleotide sequence ID" value="NZ_WSUR01000014.1"/>
</dbReference>
<dbReference type="SMR" id="Q8Z0U3"/>
<dbReference type="STRING" id="220341.gene:17588736"/>
<dbReference type="KEGG" id="stt:t4610"/>
<dbReference type="KEGG" id="sty:STY4918"/>
<dbReference type="PATRIC" id="fig|220341.7.peg.5039"/>
<dbReference type="eggNOG" id="COG0274">
    <property type="taxonomic scope" value="Bacteria"/>
</dbReference>
<dbReference type="HOGENOM" id="CLU_053595_3_1_6"/>
<dbReference type="OMA" id="MNACIPP"/>
<dbReference type="UniPathway" id="UPA00002">
    <property type="reaction ID" value="UER00468"/>
</dbReference>
<dbReference type="Proteomes" id="UP000000541">
    <property type="component" value="Chromosome"/>
</dbReference>
<dbReference type="Proteomes" id="UP000002670">
    <property type="component" value="Chromosome"/>
</dbReference>
<dbReference type="GO" id="GO:0005737">
    <property type="term" value="C:cytoplasm"/>
    <property type="evidence" value="ECO:0007669"/>
    <property type="project" value="UniProtKB-SubCell"/>
</dbReference>
<dbReference type="GO" id="GO:0004139">
    <property type="term" value="F:deoxyribose-phosphate aldolase activity"/>
    <property type="evidence" value="ECO:0007669"/>
    <property type="project" value="UniProtKB-UniRule"/>
</dbReference>
<dbReference type="GO" id="GO:0006018">
    <property type="term" value="P:2-deoxyribose 1-phosphate catabolic process"/>
    <property type="evidence" value="ECO:0007669"/>
    <property type="project" value="UniProtKB-UniRule"/>
</dbReference>
<dbReference type="GO" id="GO:0016052">
    <property type="term" value="P:carbohydrate catabolic process"/>
    <property type="evidence" value="ECO:0007669"/>
    <property type="project" value="TreeGrafter"/>
</dbReference>
<dbReference type="GO" id="GO:0009264">
    <property type="term" value="P:deoxyribonucleotide catabolic process"/>
    <property type="evidence" value="ECO:0007669"/>
    <property type="project" value="InterPro"/>
</dbReference>
<dbReference type="CDD" id="cd00959">
    <property type="entry name" value="DeoC"/>
    <property type="match status" value="1"/>
</dbReference>
<dbReference type="FunFam" id="3.20.20.70:FF:000034">
    <property type="entry name" value="Deoxyribose-phosphate aldolase"/>
    <property type="match status" value="1"/>
</dbReference>
<dbReference type="Gene3D" id="3.20.20.70">
    <property type="entry name" value="Aldolase class I"/>
    <property type="match status" value="1"/>
</dbReference>
<dbReference type="HAMAP" id="MF_00592">
    <property type="entry name" value="DeoC_type2"/>
    <property type="match status" value="1"/>
</dbReference>
<dbReference type="InterPro" id="IPR013785">
    <property type="entry name" value="Aldolase_TIM"/>
</dbReference>
<dbReference type="InterPro" id="IPR011343">
    <property type="entry name" value="DeoC"/>
</dbReference>
<dbReference type="InterPro" id="IPR002915">
    <property type="entry name" value="DeoC/FbaB/LacD_aldolase"/>
</dbReference>
<dbReference type="InterPro" id="IPR023649">
    <property type="entry name" value="DeoC_typeII"/>
</dbReference>
<dbReference type="NCBIfam" id="TIGR00126">
    <property type="entry name" value="deoC"/>
    <property type="match status" value="1"/>
</dbReference>
<dbReference type="PANTHER" id="PTHR10889">
    <property type="entry name" value="DEOXYRIBOSE-PHOSPHATE ALDOLASE"/>
    <property type="match status" value="1"/>
</dbReference>
<dbReference type="PANTHER" id="PTHR10889:SF3">
    <property type="entry name" value="DEOXYRIBOSE-PHOSPHATE ALDOLASE"/>
    <property type="match status" value="1"/>
</dbReference>
<dbReference type="Pfam" id="PF01791">
    <property type="entry name" value="DeoC"/>
    <property type="match status" value="1"/>
</dbReference>
<dbReference type="PIRSF" id="PIRSF001357">
    <property type="entry name" value="DeoC"/>
    <property type="match status" value="1"/>
</dbReference>
<dbReference type="SMART" id="SM01133">
    <property type="entry name" value="DeoC"/>
    <property type="match status" value="1"/>
</dbReference>
<dbReference type="SUPFAM" id="SSF51569">
    <property type="entry name" value="Aldolase"/>
    <property type="match status" value="1"/>
</dbReference>
<comment type="function">
    <text evidence="1">Catalyzes a reversible aldol reaction between acetaldehyde and D-glyceraldehyde 3-phosphate to generate 2-deoxy-D-ribose 5-phosphate.</text>
</comment>
<comment type="catalytic activity">
    <reaction evidence="1">
        <text>2-deoxy-D-ribose 5-phosphate = D-glyceraldehyde 3-phosphate + acetaldehyde</text>
        <dbReference type="Rhea" id="RHEA:12821"/>
        <dbReference type="ChEBI" id="CHEBI:15343"/>
        <dbReference type="ChEBI" id="CHEBI:59776"/>
        <dbReference type="ChEBI" id="CHEBI:62877"/>
        <dbReference type="EC" id="4.1.2.4"/>
    </reaction>
</comment>
<comment type="pathway">
    <text evidence="1">Carbohydrate degradation; 2-deoxy-D-ribose 1-phosphate degradation; D-glyceraldehyde 3-phosphate and acetaldehyde from 2-deoxy-alpha-D-ribose 1-phosphate: step 2/2.</text>
</comment>
<comment type="subcellular location">
    <subcellularLocation>
        <location evidence="1">Cytoplasm</location>
    </subcellularLocation>
</comment>
<comment type="similarity">
    <text evidence="1 2">Belongs to the DeoC/FbaB aldolase family. DeoC type 2 subfamily.</text>
</comment>
<comment type="sequence caution" evidence="2">
    <conflict type="erroneous initiation">
        <sequence resource="EMBL-CDS" id="AAO72042"/>
    </conflict>
</comment>
<comment type="sequence caution" evidence="2">
    <conflict type="erroneous initiation">
        <sequence resource="EMBL-CDS" id="CAD03402"/>
    </conflict>
</comment>
<protein>
    <recommendedName>
        <fullName evidence="1">Deoxyribose-phosphate aldolase</fullName>
        <shortName evidence="1">DERA</shortName>
        <ecNumber evidence="1">4.1.2.4</ecNumber>
    </recommendedName>
    <alternativeName>
        <fullName evidence="1">2-deoxy-D-ribose 5-phosphate aldolase</fullName>
    </alternativeName>
    <alternativeName>
        <fullName evidence="1">Phosphodeoxyriboaldolase</fullName>
        <shortName evidence="1">Deoxyriboaldolase</shortName>
    </alternativeName>
</protein>
<proteinExistence type="inferred from homology"/>
<name>DEOC_SALTI</name>
<reference key="1">
    <citation type="journal article" date="2001" name="Nature">
        <title>Complete genome sequence of a multiple drug resistant Salmonella enterica serovar Typhi CT18.</title>
        <authorList>
            <person name="Parkhill J."/>
            <person name="Dougan G."/>
            <person name="James K.D."/>
            <person name="Thomson N.R."/>
            <person name="Pickard D."/>
            <person name="Wain J."/>
            <person name="Churcher C.M."/>
            <person name="Mungall K.L."/>
            <person name="Bentley S.D."/>
            <person name="Holden M.T.G."/>
            <person name="Sebaihia M."/>
            <person name="Baker S."/>
            <person name="Basham D."/>
            <person name="Brooks K."/>
            <person name="Chillingworth T."/>
            <person name="Connerton P."/>
            <person name="Cronin A."/>
            <person name="Davis P."/>
            <person name="Davies R.M."/>
            <person name="Dowd L."/>
            <person name="White N."/>
            <person name="Farrar J."/>
            <person name="Feltwell T."/>
            <person name="Hamlin N."/>
            <person name="Haque A."/>
            <person name="Hien T.T."/>
            <person name="Holroyd S."/>
            <person name="Jagels K."/>
            <person name="Krogh A."/>
            <person name="Larsen T.S."/>
            <person name="Leather S."/>
            <person name="Moule S."/>
            <person name="O'Gaora P."/>
            <person name="Parry C."/>
            <person name="Quail M.A."/>
            <person name="Rutherford K.M."/>
            <person name="Simmonds M."/>
            <person name="Skelton J."/>
            <person name="Stevens K."/>
            <person name="Whitehead S."/>
            <person name="Barrell B.G."/>
        </authorList>
    </citation>
    <scope>NUCLEOTIDE SEQUENCE [LARGE SCALE GENOMIC DNA]</scope>
    <source>
        <strain>CT18</strain>
    </source>
</reference>
<reference key="2">
    <citation type="journal article" date="2003" name="J. Bacteriol.">
        <title>Comparative genomics of Salmonella enterica serovar Typhi strains Ty2 and CT18.</title>
        <authorList>
            <person name="Deng W."/>
            <person name="Liou S.-R."/>
            <person name="Plunkett G. III"/>
            <person name="Mayhew G.F."/>
            <person name="Rose D.J."/>
            <person name="Burland V."/>
            <person name="Kodoyianni V."/>
            <person name="Schwartz D.C."/>
            <person name="Blattner F.R."/>
        </authorList>
    </citation>
    <scope>NUCLEOTIDE SEQUENCE [LARGE SCALE GENOMIC DNA]</scope>
    <source>
        <strain>ATCC 700931 / Ty2</strain>
    </source>
</reference>
<accession>Q8Z0U3</accession>
<sequence>MTDLKASSLRALKLMDLTTLNDDDTNEKVIALCHQAKTPVGNTAAICIYPRFIPIARKTLKEQGTPDIRIATVTNFPHGNDDIDIALAETRAAIAYGADEVDVVFPYRALIAGNEQVGFDLVKACKDACAAANVLLKVIIETGELKEEALIRKASEISIKAGADFIKTSTGKVPVNATPESARIMMEVIRDMGVSKTVGFKPAGGVRTAEDAQKFLAIADELFGANWADSRHYRFGASSLLASLLKALGHGDGKSASSY</sequence>
<evidence type="ECO:0000255" key="1">
    <source>
        <dbReference type="HAMAP-Rule" id="MF_00592"/>
    </source>
</evidence>
<evidence type="ECO:0000305" key="2"/>